<sequence>MKLLVFGISYKTAPISLRERVIFSPENINIALNNLLKKSDILGGVILSTCNRTEVYLSIKNFYKAKKIIILWLYKFFNDLKIKEIKNNFYSYIDNYAVSHLMRVTSGLDSMILGEHQILSQVKSAFFRSLKNKNISIDLQKLFESAFSVAKKIRSETKIGSYSISIPYIICVLLKKIFISFTEIKVMLIGSGTINELIAKQLFKYKIKDLFISNRTIDHAKNLAIKVNGCVVEFNEIFKNLNKMQVIITSTYSRKLIITYKIIKSIIEKNKNKKIIFIDISIPRNIDKKIKKITGVHLYTLEDLKDLITNNLEKRKNAATLAENIIKKESIKFMSHIKGYYSSEIIKKYRFQINKLKKIYEKKALLELKLGNNPENIIKKLTYKLTNRLVHKPTKLLYNTSCSKNNKDLYDLYNKLKIDL</sequence>
<evidence type="ECO:0000255" key="1">
    <source>
        <dbReference type="HAMAP-Rule" id="MF_00087"/>
    </source>
</evidence>
<feature type="chain" id="PRO_0000114087" description="Glutamyl-tRNA reductase">
    <location>
        <begin position="1"/>
        <end position="420"/>
    </location>
</feature>
<feature type="active site" description="Nucleophile" evidence="1">
    <location>
        <position position="50"/>
    </location>
</feature>
<feature type="binding site" evidence="1">
    <location>
        <begin position="49"/>
        <end position="52"/>
    </location>
    <ligand>
        <name>substrate</name>
    </ligand>
</feature>
<feature type="binding site" evidence="1">
    <location>
        <position position="110"/>
    </location>
    <ligand>
        <name>substrate</name>
    </ligand>
</feature>
<feature type="binding site" evidence="1">
    <location>
        <begin position="115"/>
        <end position="117"/>
    </location>
    <ligand>
        <name>substrate</name>
    </ligand>
</feature>
<feature type="binding site" evidence="1">
    <location>
        <position position="121"/>
    </location>
    <ligand>
        <name>substrate</name>
    </ligand>
</feature>
<feature type="binding site" evidence="1">
    <location>
        <begin position="190"/>
        <end position="195"/>
    </location>
    <ligand>
        <name>NADP(+)</name>
        <dbReference type="ChEBI" id="CHEBI:58349"/>
    </ligand>
</feature>
<feature type="site" description="Important for activity" evidence="1">
    <location>
        <position position="100"/>
    </location>
</feature>
<protein>
    <recommendedName>
        <fullName evidence="1">Glutamyl-tRNA reductase</fullName>
        <shortName evidence="1">GluTR</shortName>
        <ecNumber evidence="1">1.2.1.70</ecNumber>
    </recommendedName>
</protein>
<proteinExistence type="inferred from homology"/>
<dbReference type="EC" id="1.2.1.70" evidence="1"/>
<dbReference type="EMBL" id="BA000021">
    <property type="protein sequence ID" value="BAC24492.1"/>
    <property type="molecule type" value="Genomic_DNA"/>
</dbReference>
<dbReference type="SMR" id="Q8D2K8"/>
<dbReference type="STRING" id="36870.gene:10368846"/>
<dbReference type="KEGG" id="wbr:hemA"/>
<dbReference type="eggNOG" id="COG0373">
    <property type="taxonomic scope" value="Bacteria"/>
</dbReference>
<dbReference type="HOGENOM" id="CLU_035113_2_2_6"/>
<dbReference type="OrthoDB" id="110209at2"/>
<dbReference type="UniPathway" id="UPA00251">
    <property type="reaction ID" value="UER00316"/>
</dbReference>
<dbReference type="Proteomes" id="UP000000562">
    <property type="component" value="Chromosome"/>
</dbReference>
<dbReference type="GO" id="GO:0008883">
    <property type="term" value="F:glutamyl-tRNA reductase activity"/>
    <property type="evidence" value="ECO:0007669"/>
    <property type="project" value="UniProtKB-UniRule"/>
</dbReference>
<dbReference type="GO" id="GO:0050661">
    <property type="term" value="F:NADP binding"/>
    <property type="evidence" value="ECO:0007669"/>
    <property type="project" value="InterPro"/>
</dbReference>
<dbReference type="GO" id="GO:0019353">
    <property type="term" value="P:protoporphyrinogen IX biosynthetic process from glutamate"/>
    <property type="evidence" value="ECO:0007669"/>
    <property type="project" value="TreeGrafter"/>
</dbReference>
<dbReference type="CDD" id="cd05213">
    <property type="entry name" value="NAD_bind_Glutamyl_tRNA_reduct"/>
    <property type="match status" value="1"/>
</dbReference>
<dbReference type="FunFam" id="3.30.460.30:FF:000001">
    <property type="entry name" value="Glutamyl-tRNA reductase"/>
    <property type="match status" value="1"/>
</dbReference>
<dbReference type="FunFam" id="3.40.50.720:FF:000031">
    <property type="entry name" value="Glutamyl-tRNA reductase"/>
    <property type="match status" value="1"/>
</dbReference>
<dbReference type="Gene3D" id="3.30.460.30">
    <property type="entry name" value="Glutamyl-tRNA reductase, N-terminal domain"/>
    <property type="match status" value="1"/>
</dbReference>
<dbReference type="Gene3D" id="3.40.50.720">
    <property type="entry name" value="NAD(P)-binding Rossmann-like Domain"/>
    <property type="match status" value="1"/>
</dbReference>
<dbReference type="HAMAP" id="MF_00087">
    <property type="entry name" value="Glu_tRNA_reductase"/>
    <property type="match status" value="1"/>
</dbReference>
<dbReference type="InterPro" id="IPR000343">
    <property type="entry name" value="4pyrrol_synth_GluRdtase"/>
</dbReference>
<dbReference type="InterPro" id="IPR015896">
    <property type="entry name" value="4pyrrol_synth_GluRdtase_dimer"/>
</dbReference>
<dbReference type="InterPro" id="IPR015895">
    <property type="entry name" value="4pyrrol_synth_GluRdtase_N"/>
</dbReference>
<dbReference type="InterPro" id="IPR018214">
    <property type="entry name" value="GluRdtase_CS"/>
</dbReference>
<dbReference type="InterPro" id="IPR036453">
    <property type="entry name" value="GluRdtase_dimer_dom_sf"/>
</dbReference>
<dbReference type="InterPro" id="IPR036343">
    <property type="entry name" value="GluRdtase_N_sf"/>
</dbReference>
<dbReference type="InterPro" id="IPR036291">
    <property type="entry name" value="NAD(P)-bd_dom_sf"/>
</dbReference>
<dbReference type="InterPro" id="IPR006151">
    <property type="entry name" value="Shikm_DH/Glu-tRNA_Rdtase"/>
</dbReference>
<dbReference type="NCBIfam" id="TIGR01035">
    <property type="entry name" value="hemA"/>
    <property type="match status" value="1"/>
</dbReference>
<dbReference type="PANTHER" id="PTHR43013">
    <property type="entry name" value="GLUTAMYL-TRNA REDUCTASE"/>
    <property type="match status" value="1"/>
</dbReference>
<dbReference type="PANTHER" id="PTHR43013:SF1">
    <property type="entry name" value="GLUTAMYL-TRNA REDUCTASE"/>
    <property type="match status" value="1"/>
</dbReference>
<dbReference type="Pfam" id="PF00745">
    <property type="entry name" value="GlutR_dimer"/>
    <property type="match status" value="1"/>
</dbReference>
<dbReference type="Pfam" id="PF05201">
    <property type="entry name" value="GlutR_N"/>
    <property type="match status" value="1"/>
</dbReference>
<dbReference type="Pfam" id="PF01488">
    <property type="entry name" value="Shikimate_DH"/>
    <property type="match status" value="1"/>
</dbReference>
<dbReference type="PIRSF" id="PIRSF000445">
    <property type="entry name" value="4pyrrol_synth_GluRdtase"/>
    <property type="match status" value="1"/>
</dbReference>
<dbReference type="SUPFAM" id="SSF69742">
    <property type="entry name" value="Glutamyl tRNA-reductase catalytic, N-terminal domain"/>
    <property type="match status" value="1"/>
</dbReference>
<dbReference type="SUPFAM" id="SSF69075">
    <property type="entry name" value="Glutamyl tRNA-reductase dimerization domain"/>
    <property type="match status" value="1"/>
</dbReference>
<dbReference type="SUPFAM" id="SSF51735">
    <property type="entry name" value="NAD(P)-binding Rossmann-fold domains"/>
    <property type="match status" value="1"/>
</dbReference>
<dbReference type="PROSITE" id="PS00747">
    <property type="entry name" value="GLUTR"/>
    <property type="match status" value="1"/>
</dbReference>
<gene>
    <name evidence="1" type="primary">hemA</name>
    <name type="ordered locus">WIGBR3460</name>
</gene>
<comment type="function">
    <text evidence="1">Catalyzes the NADPH-dependent reduction of glutamyl-tRNA(Glu) to glutamate 1-semialdehyde (GSA).</text>
</comment>
<comment type="catalytic activity">
    <reaction evidence="1">
        <text>(S)-4-amino-5-oxopentanoate + tRNA(Glu) + NADP(+) = L-glutamyl-tRNA(Glu) + NADPH + H(+)</text>
        <dbReference type="Rhea" id="RHEA:12344"/>
        <dbReference type="Rhea" id="RHEA-COMP:9663"/>
        <dbReference type="Rhea" id="RHEA-COMP:9680"/>
        <dbReference type="ChEBI" id="CHEBI:15378"/>
        <dbReference type="ChEBI" id="CHEBI:57501"/>
        <dbReference type="ChEBI" id="CHEBI:57783"/>
        <dbReference type="ChEBI" id="CHEBI:58349"/>
        <dbReference type="ChEBI" id="CHEBI:78442"/>
        <dbReference type="ChEBI" id="CHEBI:78520"/>
        <dbReference type="EC" id="1.2.1.70"/>
    </reaction>
</comment>
<comment type="pathway">
    <text evidence="1">Porphyrin-containing compound metabolism; protoporphyrin-IX biosynthesis; 5-aminolevulinate from L-glutamyl-tRNA(Glu): step 1/2.</text>
</comment>
<comment type="subunit">
    <text evidence="1">Homodimer.</text>
</comment>
<comment type="domain">
    <text evidence="1">Possesses an unusual extended V-shaped dimeric structure with each monomer consisting of three distinct domains arranged along a curved 'spinal' alpha-helix. The N-terminal catalytic domain specifically recognizes the glutamate moiety of the substrate. The second domain is the NADPH-binding domain, and the third C-terminal domain is responsible for dimerization.</text>
</comment>
<comment type="miscellaneous">
    <text evidence="1">During catalysis, the active site Cys acts as a nucleophile attacking the alpha-carbonyl group of tRNA-bound glutamate with the formation of a thioester intermediate between enzyme and glutamate, and the concomitant release of tRNA(Glu). The thioester intermediate is finally reduced by direct hydride transfer from NADPH, to form the product GSA.</text>
</comment>
<comment type="similarity">
    <text evidence="1">Belongs to the glutamyl-tRNA reductase family.</text>
</comment>
<accession>Q8D2K8</accession>
<reference key="1">
    <citation type="journal article" date="2002" name="Nat. Genet.">
        <title>Genome sequence of the endocellular obligate symbiont of tsetse flies, Wigglesworthia glossinidia.</title>
        <authorList>
            <person name="Akman L."/>
            <person name="Yamashita A."/>
            <person name="Watanabe H."/>
            <person name="Oshima K."/>
            <person name="Shiba T."/>
            <person name="Hattori M."/>
            <person name="Aksoy S."/>
        </authorList>
    </citation>
    <scope>NUCLEOTIDE SEQUENCE [LARGE SCALE GENOMIC DNA]</scope>
</reference>
<name>HEM1_WIGBR</name>
<keyword id="KW-0521">NADP</keyword>
<keyword id="KW-0560">Oxidoreductase</keyword>
<keyword id="KW-0627">Porphyrin biosynthesis</keyword>
<keyword id="KW-1185">Reference proteome</keyword>
<organism>
    <name type="scientific">Wigglesworthia glossinidia brevipalpis</name>
    <dbReference type="NCBI Taxonomy" id="36870"/>
    <lineage>
        <taxon>Bacteria</taxon>
        <taxon>Pseudomonadati</taxon>
        <taxon>Pseudomonadota</taxon>
        <taxon>Gammaproteobacteria</taxon>
        <taxon>Enterobacterales</taxon>
        <taxon>Erwiniaceae</taxon>
        <taxon>Wigglesworthia</taxon>
    </lineage>
</organism>